<accession>Q9F2F0</accession>
<evidence type="ECO:0000255" key="1">
    <source>
        <dbReference type="HAMAP-Rule" id="MF_00163"/>
    </source>
</evidence>
<evidence type="ECO:0007829" key="2">
    <source>
        <dbReference type="PDB" id="1LM6"/>
    </source>
</evidence>
<gene>
    <name evidence="1" type="primary">def</name>
    <name type="ordered locus">SP_1456</name>
</gene>
<dbReference type="EC" id="3.5.1.88" evidence="1"/>
<dbReference type="EMBL" id="AJ278785">
    <property type="protein sequence ID" value="CAC15392.1"/>
    <property type="molecule type" value="Genomic_DNA"/>
</dbReference>
<dbReference type="EMBL" id="AE005672">
    <property type="protein sequence ID" value="AAK75550.1"/>
    <property type="molecule type" value="Genomic_DNA"/>
</dbReference>
<dbReference type="PIR" id="E95169">
    <property type="entry name" value="E95169"/>
</dbReference>
<dbReference type="RefSeq" id="WP_001272941.1">
    <property type="nucleotide sequence ID" value="NZ_CP155539.1"/>
</dbReference>
<dbReference type="PDB" id="1LM6">
    <property type="method" value="X-ray"/>
    <property type="resolution" value="1.75 A"/>
    <property type="chains" value="A=1-203"/>
</dbReference>
<dbReference type="PDBsum" id="1LM6"/>
<dbReference type="SMR" id="Q9F2F0"/>
<dbReference type="BindingDB" id="Q9F2F0"/>
<dbReference type="ChEMBL" id="CHEMBL2029196"/>
<dbReference type="PaxDb" id="170187-SP_1456"/>
<dbReference type="EnsemblBacteria" id="AAK75550">
    <property type="protein sequence ID" value="AAK75550"/>
    <property type="gene ID" value="SP_1456"/>
</dbReference>
<dbReference type="GeneID" id="45653294"/>
<dbReference type="KEGG" id="spn:SP_1456"/>
<dbReference type="eggNOG" id="COG0242">
    <property type="taxonomic scope" value="Bacteria"/>
</dbReference>
<dbReference type="PhylomeDB" id="Q9F2F0"/>
<dbReference type="BioCyc" id="SPNE170187:G1FZB-1472-MONOMER"/>
<dbReference type="BRENDA" id="3.5.1.88">
    <property type="organism ID" value="1960"/>
</dbReference>
<dbReference type="EvolutionaryTrace" id="Q9F2F0"/>
<dbReference type="Proteomes" id="UP000000585">
    <property type="component" value="Chromosome"/>
</dbReference>
<dbReference type="GO" id="GO:0046872">
    <property type="term" value="F:metal ion binding"/>
    <property type="evidence" value="ECO:0007669"/>
    <property type="project" value="UniProtKB-KW"/>
</dbReference>
<dbReference type="GO" id="GO:0042586">
    <property type="term" value="F:peptide deformylase activity"/>
    <property type="evidence" value="ECO:0007669"/>
    <property type="project" value="UniProtKB-UniRule"/>
</dbReference>
<dbReference type="GO" id="GO:0043686">
    <property type="term" value="P:co-translational protein modification"/>
    <property type="evidence" value="ECO:0007669"/>
    <property type="project" value="TreeGrafter"/>
</dbReference>
<dbReference type="GO" id="GO:0006412">
    <property type="term" value="P:translation"/>
    <property type="evidence" value="ECO:0007669"/>
    <property type="project" value="UniProtKB-UniRule"/>
</dbReference>
<dbReference type="CDD" id="cd00487">
    <property type="entry name" value="Pep_deformylase"/>
    <property type="match status" value="1"/>
</dbReference>
<dbReference type="FunFam" id="3.90.45.10:FF:000002">
    <property type="entry name" value="Peptide deformylase"/>
    <property type="match status" value="1"/>
</dbReference>
<dbReference type="Gene3D" id="3.90.45.10">
    <property type="entry name" value="Peptide deformylase"/>
    <property type="match status" value="1"/>
</dbReference>
<dbReference type="HAMAP" id="MF_00163">
    <property type="entry name" value="Pep_deformylase"/>
    <property type="match status" value="1"/>
</dbReference>
<dbReference type="InterPro" id="IPR023635">
    <property type="entry name" value="Peptide_deformylase"/>
</dbReference>
<dbReference type="InterPro" id="IPR036821">
    <property type="entry name" value="Peptide_deformylase_sf"/>
</dbReference>
<dbReference type="NCBIfam" id="TIGR00079">
    <property type="entry name" value="pept_deformyl"/>
    <property type="match status" value="1"/>
</dbReference>
<dbReference type="PANTHER" id="PTHR10458">
    <property type="entry name" value="PEPTIDE DEFORMYLASE"/>
    <property type="match status" value="1"/>
</dbReference>
<dbReference type="PANTHER" id="PTHR10458:SF8">
    <property type="entry name" value="PEPTIDE DEFORMYLASE 2"/>
    <property type="match status" value="1"/>
</dbReference>
<dbReference type="Pfam" id="PF01327">
    <property type="entry name" value="Pep_deformylase"/>
    <property type="match status" value="1"/>
</dbReference>
<dbReference type="PIRSF" id="PIRSF004749">
    <property type="entry name" value="Pep_def"/>
    <property type="match status" value="1"/>
</dbReference>
<dbReference type="PRINTS" id="PR01576">
    <property type="entry name" value="PDEFORMYLASE"/>
</dbReference>
<dbReference type="SUPFAM" id="SSF56420">
    <property type="entry name" value="Peptide deformylase"/>
    <property type="match status" value="1"/>
</dbReference>
<reference key="1">
    <citation type="journal article" date="2001" name="Antimicrob. Agents Chemother.">
        <title>Peptide deformylase as an antibacterial drug target: target validation and resistance development.</title>
        <authorList>
            <person name="Apfel C.M."/>
            <person name="Locher H."/>
            <person name="Evers S."/>
            <person name="Takacs B."/>
            <person name="Hubschwerlen C."/>
            <person name="Pirson W."/>
            <person name="Page M.G."/>
            <person name="Keck W."/>
        </authorList>
    </citation>
    <scope>NUCLEOTIDE SEQUENCE [GENOMIC DNA]</scope>
</reference>
<reference key="2">
    <citation type="journal article" date="2001" name="Science">
        <title>Complete genome sequence of a virulent isolate of Streptococcus pneumoniae.</title>
        <authorList>
            <person name="Tettelin H."/>
            <person name="Nelson K.E."/>
            <person name="Paulsen I.T."/>
            <person name="Eisen J.A."/>
            <person name="Read T.D."/>
            <person name="Peterson S.N."/>
            <person name="Heidelberg J.F."/>
            <person name="DeBoy R.T."/>
            <person name="Haft D.H."/>
            <person name="Dodson R.J."/>
            <person name="Durkin A.S."/>
            <person name="Gwinn M.L."/>
            <person name="Kolonay J.F."/>
            <person name="Nelson W.C."/>
            <person name="Peterson J.D."/>
            <person name="Umayam L.A."/>
            <person name="White O."/>
            <person name="Salzberg S.L."/>
            <person name="Lewis M.R."/>
            <person name="Radune D."/>
            <person name="Holtzapple E.K."/>
            <person name="Khouri H.M."/>
            <person name="Wolf A.M."/>
            <person name="Utterback T.R."/>
            <person name="Hansen C.L."/>
            <person name="McDonald L.A."/>
            <person name="Feldblyum T.V."/>
            <person name="Angiuoli S.V."/>
            <person name="Dickinson T."/>
            <person name="Hickey E.K."/>
            <person name="Holt I.E."/>
            <person name="Loftus B.J."/>
            <person name="Yang F."/>
            <person name="Smith H.O."/>
            <person name="Venter J.C."/>
            <person name="Dougherty B.A."/>
            <person name="Morrison D.A."/>
            <person name="Hollingshead S.K."/>
            <person name="Fraser C.M."/>
        </authorList>
    </citation>
    <scope>NUCLEOTIDE SEQUENCE [LARGE SCALE GENOMIC DNA]</scope>
    <source>
        <strain>ATCC BAA-334 / TIGR4</strain>
    </source>
</reference>
<organism>
    <name type="scientific">Streptococcus pneumoniae serotype 4 (strain ATCC BAA-334 / TIGR4)</name>
    <dbReference type="NCBI Taxonomy" id="170187"/>
    <lineage>
        <taxon>Bacteria</taxon>
        <taxon>Bacillati</taxon>
        <taxon>Bacillota</taxon>
        <taxon>Bacilli</taxon>
        <taxon>Lactobacillales</taxon>
        <taxon>Streptococcaceae</taxon>
        <taxon>Streptococcus</taxon>
    </lineage>
</organism>
<sequence>MSAIERITKAAHLIDMNDIIREGNPTLRAIAEEVTFPLSDQEIILGEKMMQFLKHSQDPVMAEKMGLRGGVGLAAPQLDISKRIIAVLVPNIVEEGETPQEAYDLEAIMYNPKIVSHSVQDAALGEGEGCLSVDRNVPGYVVRHARVTVDYFDKDGEKHRIKLKGYNSIVVQHEIDHINGIMFYDRINEKDPFAVKDGLLILE</sequence>
<keyword id="KW-0002">3D-structure</keyword>
<keyword id="KW-0378">Hydrolase</keyword>
<keyword id="KW-0408">Iron</keyword>
<keyword id="KW-0479">Metal-binding</keyword>
<keyword id="KW-0648">Protein biosynthesis</keyword>
<keyword id="KW-1185">Reference proteome</keyword>
<name>DEF_STRPN</name>
<comment type="function">
    <text evidence="1">Removes the formyl group from the N-terminal Met of newly synthesized proteins. Requires at least a dipeptide for an efficient rate of reaction. N-terminal L-methionine is a prerequisite for activity but the enzyme has broad specificity at other positions.</text>
</comment>
<comment type="catalytic activity">
    <reaction evidence="1">
        <text>N-terminal N-formyl-L-methionyl-[peptide] + H2O = N-terminal L-methionyl-[peptide] + formate</text>
        <dbReference type="Rhea" id="RHEA:24420"/>
        <dbReference type="Rhea" id="RHEA-COMP:10639"/>
        <dbReference type="Rhea" id="RHEA-COMP:10640"/>
        <dbReference type="ChEBI" id="CHEBI:15377"/>
        <dbReference type="ChEBI" id="CHEBI:15740"/>
        <dbReference type="ChEBI" id="CHEBI:49298"/>
        <dbReference type="ChEBI" id="CHEBI:64731"/>
        <dbReference type="EC" id="3.5.1.88"/>
    </reaction>
</comment>
<comment type="cofactor">
    <cofactor evidence="1">
        <name>Fe(2+)</name>
        <dbReference type="ChEBI" id="CHEBI:29033"/>
    </cofactor>
    <text evidence="1">Binds 1 Fe(2+) ion.</text>
</comment>
<comment type="similarity">
    <text evidence="1">Belongs to the polypeptide deformylase family.</text>
</comment>
<proteinExistence type="evidence at protein level"/>
<protein>
    <recommendedName>
        <fullName evidence="1">Peptide deformylase</fullName>
        <shortName evidence="1">PDF</shortName>
        <ecNumber evidence="1">3.5.1.88</ecNumber>
    </recommendedName>
    <alternativeName>
        <fullName evidence="1">Polypeptide deformylase</fullName>
    </alternativeName>
</protein>
<feature type="chain" id="PRO_0000082857" description="Peptide deformylase">
    <location>
        <begin position="1"/>
        <end position="203"/>
    </location>
</feature>
<feature type="active site" evidence="1">
    <location>
        <position position="174"/>
    </location>
</feature>
<feature type="binding site" evidence="1">
    <location>
        <position position="130"/>
    </location>
    <ligand>
        <name>Fe cation</name>
        <dbReference type="ChEBI" id="CHEBI:24875"/>
    </ligand>
</feature>
<feature type="binding site" evidence="1">
    <location>
        <position position="173"/>
    </location>
    <ligand>
        <name>Fe cation</name>
        <dbReference type="ChEBI" id="CHEBI:24875"/>
    </ligand>
</feature>
<feature type="binding site" evidence="1">
    <location>
        <position position="177"/>
    </location>
    <ligand>
        <name>Fe cation</name>
        <dbReference type="ChEBI" id="CHEBI:24875"/>
    </ligand>
</feature>
<feature type="helix" evidence="2">
    <location>
        <begin position="3"/>
        <end position="7"/>
    </location>
</feature>
<feature type="helix" evidence="2">
    <location>
        <begin position="16"/>
        <end position="18"/>
    </location>
</feature>
<feature type="helix" evidence="2">
    <location>
        <begin position="25"/>
        <end position="28"/>
    </location>
</feature>
<feature type="helix" evidence="2">
    <location>
        <begin position="40"/>
        <end position="56"/>
    </location>
</feature>
<feature type="helix" evidence="2">
    <location>
        <begin position="59"/>
        <end position="65"/>
    </location>
</feature>
<feature type="strand" evidence="2">
    <location>
        <begin position="71"/>
        <end position="74"/>
    </location>
</feature>
<feature type="helix" evidence="2">
    <location>
        <begin position="75"/>
        <end position="78"/>
    </location>
</feature>
<feature type="strand" evidence="2">
    <location>
        <begin position="82"/>
        <end position="89"/>
    </location>
</feature>
<feature type="strand" evidence="2">
    <location>
        <begin position="105"/>
        <end position="117"/>
    </location>
</feature>
<feature type="strand" evidence="2">
    <location>
        <begin position="119"/>
        <end position="124"/>
    </location>
</feature>
<feature type="strand" evidence="2">
    <location>
        <begin position="143"/>
        <end position="145"/>
    </location>
</feature>
<feature type="strand" evidence="2">
    <location>
        <begin position="147"/>
        <end position="152"/>
    </location>
</feature>
<feature type="strand" evidence="2">
    <location>
        <begin position="158"/>
        <end position="163"/>
    </location>
</feature>
<feature type="helix" evidence="2">
    <location>
        <begin position="165"/>
        <end position="178"/>
    </location>
</feature>
<feature type="helix" evidence="2">
    <location>
        <begin position="183"/>
        <end position="186"/>
    </location>
</feature>
<feature type="strand" evidence="2">
    <location>
        <begin position="199"/>
        <end position="202"/>
    </location>
</feature>